<sequence>MPSVCMPTTYRPASCLSKTYLSSSCQPSNRRPTGCISSSMGTYGLFCEGAFNGNEKETMQVLNDRLANYLEKVRQLEKENAELEGKIQDVYQGQVLTMCPDYQSYFQTIEELQQKVLCTKAENARMIVHIDNAKLAADDFRTKYETELALRQLVEADTNGLRRILDELTLNKADLEAQVESLKEELLCLKRNHEEEVGVLRQQLGDRLNIEVDAAPPVDLTRMLEEMRCQYETMVETNHRDVEEWFNMQMEELNKQVATSSEQLQSYQSDIIDLRRTVNTLEIELQAQHSLRDSLENTLGETEGRFTSQLSQMQCMITNVESQLSDIRCDLERQNQEYKVLLDVKARLECEIDTYRGLLESEDSKLPCNPCSTPSCQPCAPSPGVSRTVCVPHTVCVPCSPCLQTRY</sequence>
<proteinExistence type="evidence at protein level"/>
<organism>
    <name type="scientific">Mus musculus</name>
    <name type="common">Mouse</name>
    <dbReference type="NCBI Taxonomy" id="10090"/>
    <lineage>
        <taxon>Eukaryota</taxon>
        <taxon>Metazoa</taxon>
        <taxon>Chordata</taxon>
        <taxon>Craniata</taxon>
        <taxon>Vertebrata</taxon>
        <taxon>Euteleostomi</taxon>
        <taxon>Mammalia</taxon>
        <taxon>Eutheria</taxon>
        <taxon>Euarchontoglires</taxon>
        <taxon>Glires</taxon>
        <taxon>Rodentia</taxon>
        <taxon>Myomorpha</taxon>
        <taxon>Muroidea</taxon>
        <taxon>Muridae</taxon>
        <taxon>Murinae</taxon>
        <taxon>Mus</taxon>
        <taxon>Mus</taxon>
    </lineage>
</organism>
<gene>
    <name type="primary">Krt32</name>
    <name type="synonym">Hka2</name>
    <name type="synonym">Krt1-2</name>
    <name type="synonym">Krtha2</name>
</gene>
<keyword id="KW-0175">Coiled coil</keyword>
<keyword id="KW-0403">Intermediate filament</keyword>
<keyword id="KW-0416">Keratin</keyword>
<keyword id="KW-1185">Reference proteome</keyword>
<evidence type="ECO:0000255" key="1">
    <source>
        <dbReference type="PROSITE-ProRule" id="PRU01188"/>
    </source>
</evidence>
<evidence type="ECO:0000305" key="2"/>
<name>K1H2_MOUSE</name>
<comment type="tissue specificity">
    <text>Cuticle of the hair shaft.</text>
</comment>
<comment type="miscellaneous">
    <text>There are two types of hair/microfibrillar keratin, I (acidic) and II (neutral to basic).</text>
</comment>
<comment type="similarity">
    <text evidence="1">Belongs to the intermediate filament family.</text>
</comment>
<dbReference type="EMBL" id="X75649">
    <property type="protein sequence ID" value="CAA53304.1"/>
    <property type="molecule type" value="mRNA"/>
</dbReference>
<dbReference type="EMBL" id="CH466662">
    <property type="protein sequence ID" value="EDL02584.1"/>
    <property type="molecule type" value="Genomic_DNA"/>
</dbReference>
<dbReference type="EMBL" id="BC117553">
    <property type="protein sequence ID" value="AAI17554.1"/>
    <property type="molecule type" value="mRNA"/>
</dbReference>
<dbReference type="EMBL" id="BC118064">
    <property type="protein sequence ID" value="AAI18065.1"/>
    <property type="molecule type" value="mRNA"/>
</dbReference>
<dbReference type="PIR" id="I48739">
    <property type="entry name" value="I48739"/>
</dbReference>
<dbReference type="RefSeq" id="NP_001152846.2">
    <property type="nucleotide sequence ID" value="NM_001159374.2"/>
</dbReference>
<dbReference type="SMR" id="Q62168"/>
<dbReference type="BioGRID" id="201025">
    <property type="interactions" value="2"/>
</dbReference>
<dbReference type="FunCoup" id="Q62168">
    <property type="interactions" value="135"/>
</dbReference>
<dbReference type="STRING" id="10090.ENSMUSP00000103042"/>
<dbReference type="GlyGen" id="Q62168">
    <property type="glycosylation" value="1 site"/>
</dbReference>
<dbReference type="iPTMnet" id="Q62168"/>
<dbReference type="PhosphoSitePlus" id="Q62168"/>
<dbReference type="jPOST" id="Q62168"/>
<dbReference type="PaxDb" id="10090-ENSMUSP00000103042"/>
<dbReference type="ProteomicsDB" id="269443"/>
<dbReference type="DNASU" id="16670"/>
<dbReference type="GeneID" id="16670"/>
<dbReference type="KEGG" id="mmu:16670"/>
<dbReference type="AGR" id="MGI:1309995"/>
<dbReference type="CTD" id="3882"/>
<dbReference type="MGI" id="MGI:1309995">
    <property type="gene designation" value="Krt32"/>
</dbReference>
<dbReference type="eggNOG" id="ENOG502SJJS">
    <property type="taxonomic scope" value="Eukaryota"/>
</dbReference>
<dbReference type="InParanoid" id="Q62168"/>
<dbReference type="OrthoDB" id="2441647at2759"/>
<dbReference type="Reactome" id="R-MMU-6805567">
    <property type="pathway name" value="Keratinization"/>
</dbReference>
<dbReference type="Reactome" id="R-MMU-6809371">
    <property type="pathway name" value="Formation of the cornified envelope"/>
</dbReference>
<dbReference type="BioGRID-ORCS" id="16670">
    <property type="hits" value="2 hits in 73 CRISPR screens"/>
</dbReference>
<dbReference type="ChiTaRS" id="Krt32">
    <property type="organism name" value="mouse"/>
</dbReference>
<dbReference type="PRO" id="PR:Q62168"/>
<dbReference type="Proteomes" id="UP000000589">
    <property type="component" value="Unplaced"/>
</dbReference>
<dbReference type="RNAct" id="Q62168">
    <property type="molecule type" value="protein"/>
</dbReference>
<dbReference type="GO" id="GO:0005882">
    <property type="term" value="C:intermediate filament"/>
    <property type="evidence" value="ECO:0007669"/>
    <property type="project" value="UniProtKB-KW"/>
</dbReference>
<dbReference type="GO" id="GO:0005198">
    <property type="term" value="F:structural molecule activity"/>
    <property type="evidence" value="ECO:0007669"/>
    <property type="project" value="InterPro"/>
</dbReference>
<dbReference type="FunFam" id="1.20.5.1160:FF:000002">
    <property type="entry name" value="Type I keratin 10"/>
    <property type="match status" value="1"/>
</dbReference>
<dbReference type="FunFam" id="1.20.5.170:FF:000002">
    <property type="entry name" value="Type I keratin KA11"/>
    <property type="match status" value="1"/>
</dbReference>
<dbReference type="FunFam" id="1.20.5.500:FF:000001">
    <property type="entry name" value="Type II keratin 23"/>
    <property type="match status" value="1"/>
</dbReference>
<dbReference type="Gene3D" id="1.20.5.170">
    <property type="match status" value="1"/>
</dbReference>
<dbReference type="Gene3D" id="1.20.5.500">
    <property type="entry name" value="Single helix bin"/>
    <property type="match status" value="1"/>
</dbReference>
<dbReference type="Gene3D" id="1.20.5.1160">
    <property type="entry name" value="Vasodilator-stimulated phosphoprotein"/>
    <property type="match status" value="1"/>
</dbReference>
<dbReference type="InterPro" id="IPR018039">
    <property type="entry name" value="IF_conserved"/>
</dbReference>
<dbReference type="InterPro" id="IPR039008">
    <property type="entry name" value="IF_rod_dom"/>
</dbReference>
<dbReference type="InterPro" id="IPR002957">
    <property type="entry name" value="Keratin_I"/>
</dbReference>
<dbReference type="PANTHER" id="PTHR23239">
    <property type="entry name" value="INTERMEDIATE FILAMENT"/>
    <property type="match status" value="1"/>
</dbReference>
<dbReference type="PANTHER" id="PTHR23239:SF155">
    <property type="entry name" value="KERATIN, TYPE I CUTICULAR HA2"/>
    <property type="match status" value="1"/>
</dbReference>
<dbReference type="Pfam" id="PF00038">
    <property type="entry name" value="Filament"/>
    <property type="match status" value="1"/>
</dbReference>
<dbReference type="PRINTS" id="PR01248">
    <property type="entry name" value="TYPE1KERATIN"/>
</dbReference>
<dbReference type="SMART" id="SM01391">
    <property type="entry name" value="Filament"/>
    <property type="match status" value="1"/>
</dbReference>
<dbReference type="SUPFAM" id="SSF64593">
    <property type="entry name" value="Intermediate filament protein, coiled coil region"/>
    <property type="match status" value="2"/>
</dbReference>
<dbReference type="PROSITE" id="PS00226">
    <property type="entry name" value="IF_ROD_1"/>
    <property type="match status" value="1"/>
</dbReference>
<dbReference type="PROSITE" id="PS51842">
    <property type="entry name" value="IF_ROD_2"/>
    <property type="match status" value="1"/>
</dbReference>
<accession>Q62168</accession>
<accession>Q148N4</accession>
<protein>
    <recommendedName>
        <fullName>Keratin, type I cuticular Ha2</fullName>
    </recommendedName>
    <alternativeName>
        <fullName>Hair keratin, type I Ha2</fullName>
    </alternativeName>
    <alternativeName>
        <fullName>Keratin-32</fullName>
        <shortName>K32</shortName>
    </alternativeName>
</protein>
<feature type="chain" id="PRO_0000063687" description="Keratin, type I cuticular Ha2">
    <location>
        <begin position="1"/>
        <end position="407"/>
    </location>
</feature>
<feature type="domain" description="IF rod" evidence="1">
    <location>
        <begin position="55"/>
        <end position="366"/>
    </location>
</feature>
<feature type="region of interest" description="Head">
    <location>
        <begin position="1"/>
        <end position="55"/>
    </location>
</feature>
<feature type="region of interest" description="Coil 1A">
    <location>
        <begin position="56"/>
        <end position="90"/>
    </location>
</feature>
<feature type="region of interest" description="Linker 1">
    <location>
        <begin position="91"/>
        <end position="101"/>
    </location>
</feature>
<feature type="region of interest" description="Coil 1B">
    <location>
        <begin position="102"/>
        <end position="202"/>
    </location>
</feature>
<feature type="region of interest" description="Linker 12">
    <location>
        <begin position="203"/>
        <end position="218"/>
    </location>
</feature>
<feature type="region of interest" description="Coil 2">
    <location>
        <begin position="219"/>
        <end position="362"/>
    </location>
</feature>
<feature type="region of interest" description="Tail">
    <location>
        <begin position="363"/>
        <end position="407"/>
    </location>
</feature>
<feature type="site" description="Stutter">
    <location>
        <position position="304"/>
    </location>
</feature>
<feature type="sequence conflict" description="In Ref. 1; CAA53304." evidence="2" ref="1">
    <original>M</original>
    <variation>V</variation>
    <location>
        <position position="227"/>
    </location>
</feature>
<reference key="1">
    <citation type="journal article" date="1994" name="Exp. Cell Res.">
        <title>Sequence and expression of murine type I hair keratins mHa2 and mHa3.</title>
        <authorList>
            <person name="Winter H."/>
            <person name="Siry P."/>
            <person name="Tobiasch E."/>
            <person name="Schweizer J."/>
        </authorList>
    </citation>
    <scope>NUCLEOTIDE SEQUENCE [MRNA]</scope>
    <source>
        <strain>NMRI</strain>
        <tissue>Hair</tissue>
    </source>
</reference>
<reference key="2">
    <citation type="submission" date="2005-09" db="EMBL/GenBank/DDBJ databases">
        <authorList>
            <person name="Mural R.J."/>
            <person name="Adams M.D."/>
            <person name="Myers E.W."/>
            <person name="Smith H.O."/>
            <person name="Venter J.C."/>
        </authorList>
    </citation>
    <scope>NUCLEOTIDE SEQUENCE [LARGE SCALE GENOMIC DNA]</scope>
</reference>
<reference key="3">
    <citation type="journal article" date="2004" name="Genome Res.">
        <title>The status, quality, and expansion of the NIH full-length cDNA project: the Mammalian Gene Collection (MGC).</title>
        <authorList>
            <consortium name="The MGC Project Team"/>
        </authorList>
    </citation>
    <scope>NUCLEOTIDE SEQUENCE [LARGE SCALE MRNA]</scope>
</reference>
<reference key="4">
    <citation type="journal article" date="2010" name="Cell">
        <title>A tissue-specific atlas of mouse protein phosphorylation and expression.</title>
        <authorList>
            <person name="Huttlin E.L."/>
            <person name="Jedrychowski M.P."/>
            <person name="Elias J.E."/>
            <person name="Goswami T."/>
            <person name="Rad R."/>
            <person name="Beausoleil S.A."/>
            <person name="Villen J."/>
            <person name="Haas W."/>
            <person name="Sowa M.E."/>
            <person name="Gygi S.P."/>
        </authorList>
    </citation>
    <scope>IDENTIFICATION BY MASS SPECTROMETRY [LARGE SCALE ANALYSIS]</scope>
    <source>
        <tissue>Liver</tissue>
    </source>
</reference>